<gene>
    <name type="primary">hol</name>
</gene>
<keyword id="KW-0204">Cytolysis</keyword>
<keyword id="KW-1030">Host cell inner membrane</keyword>
<keyword id="KW-0578">Host cell lysis by virus</keyword>
<keyword id="KW-1032">Host cell membrane</keyword>
<keyword id="KW-1043">Host membrane</keyword>
<keyword id="KW-0472">Membrane</keyword>
<keyword id="KW-1185">Reference proteome</keyword>
<keyword id="KW-0812">Transmembrane</keyword>
<keyword id="KW-1133">Transmembrane helix</keyword>
<keyword id="KW-1188">Viral release from host cell</keyword>
<evidence type="ECO:0000250" key="1">
    <source>
        <dbReference type="UniProtKB" id="P03705"/>
    </source>
</evidence>
<evidence type="ECO:0000250" key="2">
    <source>
        <dbReference type="UniProtKB" id="Q7Y2C1"/>
    </source>
</evidence>
<evidence type="ECO:0000255" key="3"/>
<evidence type="ECO:0000305" key="4"/>
<proteinExistence type="inferred from homology"/>
<comment type="function">
    <text evidence="2">Accumulates harmlessly in the cytoplasmic membrane until it reaches a critical concentration that triggers the formation of nanometer-scale pores (pinholes) causing host cell membrane depolarization and endolysin refolding and release into the periplasmic space (By similarity). Once the pinholin has permeabilized the host cell membrane, the SAR-endolysin is released into the periplasm and breaks down the peptidoglycan layer (By similarity). Determines the precise timing of host cell lysis. Participates with the SAR-endolysin and the U-spanin protein in the sequential events which lead to the programmed host cell lysis releasing the mature viral particles from the host cell (By similarity).</text>
</comment>
<comment type="subcellular location">
    <subcellularLocation>
        <location evidence="1">Host cell inner membrane</location>
        <topology evidence="3">Multi-pass membrane protein</topology>
    </subcellularLocation>
</comment>
<organismHost>
    <name type="scientific">Haemophilus influenzae</name>
    <dbReference type="NCBI Taxonomy" id="727"/>
</organismHost>
<accession>P51727</accession>
<sequence>MNSKIDSAIPFIGSLTALISGYSLHEWASLFGILFGAVSVWIAYRKYKEDVQARKDELAYKMLVAKIEAKKLGIAIDE</sequence>
<protein>
    <recommendedName>
        <fullName evidence="4">Holin</fullName>
    </recommendedName>
    <alternativeName>
        <fullName evidence="4">Pinholin</fullName>
    </alternativeName>
</protein>
<organism>
    <name type="scientific">Haemophilus phage HP1 (strain HP1c1)</name>
    <name type="common">Bacteriophage HP1</name>
    <dbReference type="NCBI Taxonomy" id="1289570"/>
    <lineage>
        <taxon>Viruses</taxon>
        <taxon>Duplodnaviria</taxon>
        <taxon>Heunggongvirae</taxon>
        <taxon>Uroviricota</taxon>
        <taxon>Caudoviricetes</taxon>
        <taxon>Peduoviridae</taxon>
        <taxon>Hpunavirus</taxon>
        <taxon>Haemophilus phage HP1</taxon>
    </lineage>
</organism>
<reference key="1">
    <citation type="journal article" date="1984" name="Gene">
        <title>Nucleotide sequence of cloned DNA segments of the Haemophilus influenzae bacteriophage HP1c1.</title>
        <authorList>
            <person name="Benjamin R.C."/>
            <person name="Fitzmaurice W.P."/>
            <person name="Huang P.C."/>
            <person name="Scocca J.J."/>
        </authorList>
    </citation>
    <scope>NUCLEOTIDE SEQUENCE [GENOMIC DNA]</scope>
</reference>
<reference key="2">
    <citation type="journal article" date="1996" name="Nucleic Acids Res.">
        <title>The complete nucleotide sequence of bacteriophage HP1 DNA.</title>
        <authorList>
            <person name="Esposito D."/>
            <person name="Fitzmaurice W.P."/>
            <person name="Benjamin R.C."/>
            <person name="Goodman S.D."/>
            <person name="Waldman A.S."/>
            <person name="Scocca J.J."/>
        </authorList>
    </citation>
    <scope>NUCLEOTIDE SEQUENCE [LARGE SCALE GENOMIC DNA]</scope>
</reference>
<name>HOLIN_BPHC1</name>
<feature type="chain" id="PRO_0000165307" description="Holin">
    <location>
        <begin position="1"/>
        <end position="78"/>
    </location>
</feature>
<feature type="topological domain" description="Cytoplasmic" evidence="3">
    <location>
        <begin position="1"/>
        <end position="6"/>
    </location>
</feature>
<feature type="transmembrane region" description="Helical" evidence="3">
    <location>
        <begin position="7"/>
        <end position="23"/>
    </location>
</feature>
<feature type="topological domain" description="Periplasmic" evidence="3">
    <location>
        <begin position="24"/>
        <end position="29"/>
    </location>
</feature>
<feature type="transmembrane region" description="Helical" evidence="3">
    <location>
        <begin position="30"/>
        <end position="46"/>
    </location>
</feature>
<feature type="topological domain" description="Cytoplasmic" evidence="3">
    <location>
        <begin position="47"/>
        <end position="78"/>
    </location>
</feature>
<dbReference type="EMBL" id="U24159">
    <property type="protein sequence ID" value="AAB09210.1"/>
    <property type="molecule type" value="Genomic_DNA"/>
</dbReference>
<dbReference type="PIR" id="S69531">
    <property type="entry name" value="S69531"/>
</dbReference>
<dbReference type="RefSeq" id="NP_043494.1">
    <property type="nucleotide sequence ID" value="NC_001697.1"/>
</dbReference>
<dbReference type="SMR" id="P51727"/>
<dbReference type="TCDB" id="1.E.7.1.1">
    <property type="family name" value="the hp1 holin (hp1 holin) family"/>
</dbReference>
<dbReference type="GeneID" id="1261118"/>
<dbReference type="KEGG" id="vg:1261118"/>
<dbReference type="Proteomes" id="UP000001713">
    <property type="component" value="Segment"/>
</dbReference>
<dbReference type="GO" id="GO:0020002">
    <property type="term" value="C:host cell plasma membrane"/>
    <property type="evidence" value="ECO:0007669"/>
    <property type="project" value="UniProtKB-SubCell"/>
</dbReference>
<dbReference type="GO" id="GO:0016020">
    <property type="term" value="C:membrane"/>
    <property type="evidence" value="ECO:0007669"/>
    <property type="project" value="UniProtKB-KW"/>
</dbReference>
<dbReference type="GO" id="GO:0031640">
    <property type="term" value="P:killing of cells of another organism"/>
    <property type="evidence" value="ECO:0007669"/>
    <property type="project" value="UniProtKB-KW"/>
</dbReference>
<dbReference type="InterPro" id="IPR032118">
    <property type="entry name" value="Phage_holin_HP1"/>
</dbReference>
<dbReference type="Pfam" id="PF16080">
    <property type="entry name" value="Phage_holin_2_3"/>
    <property type="match status" value="1"/>
</dbReference>